<gene>
    <name type="primary">nup42</name>
    <name type="synonym">nupl2</name>
    <name type="ORF">zgc:77724</name>
</gene>
<keyword id="KW-0472">Membrane</keyword>
<keyword id="KW-0479">Metal-binding</keyword>
<keyword id="KW-0509">mRNA transport</keyword>
<keyword id="KW-0906">Nuclear pore complex</keyword>
<keyword id="KW-0539">Nucleus</keyword>
<keyword id="KW-0653">Protein transport</keyword>
<keyword id="KW-1185">Reference proteome</keyword>
<keyword id="KW-0677">Repeat</keyword>
<keyword id="KW-0811">Translocation</keyword>
<keyword id="KW-0813">Transport</keyword>
<keyword id="KW-0862">Zinc</keyword>
<keyword id="KW-0863">Zinc-finger</keyword>
<comment type="function">
    <text evidence="1">Required for the export of mRNAs containing poly(A) tails from the nucleus into the cytoplasm.</text>
</comment>
<comment type="subunit">
    <text>Probable component of the nuclear pore complex (NPC).</text>
</comment>
<comment type="subcellular location">
    <subcellularLocation>
        <location evidence="2">Nucleus</location>
        <location evidence="2">Nuclear pore complex</location>
    </subcellularLocation>
    <subcellularLocation>
        <location evidence="2">Nucleus membrane</location>
        <topology evidence="2">Peripheral membrane protein</topology>
        <orientation evidence="2">Cytoplasmic side</orientation>
    </subcellularLocation>
</comment>
<comment type="domain">
    <text evidence="1">The FG repeats are interaction sites for karyopherins (importins, exportins) and form probably an affinity gradient, guiding the transport proteins unidirectionally with their cargo through the NPC.</text>
</comment>
<organism>
    <name type="scientific">Danio rerio</name>
    <name type="common">Zebrafish</name>
    <name type="synonym">Brachydanio rerio</name>
    <dbReference type="NCBI Taxonomy" id="7955"/>
    <lineage>
        <taxon>Eukaryota</taxon>
        <taxon>Metazoa</taxon>
        <taxon>Chordata</taxon>
        <taxon>Craniata</taxon>
        <taxon>Vertebrata</taxon>
        <taxon>Euteleostomi</taxon>
        <taxon>Actinopterygii</taxon>
        <taxon>Neopterygii</taxon>
        <taxon>Teleostei</taxon>
        <taxon>Ostariophysi</taxon>
        <taxon>Cypriniformes</taxon>
        <taxon>Danionidae</taxon>
        <taxon>Danioninae</taxon>
        <taxon>Danio</taxon>
    </lineage>
</organism>
<reference key="1">
    <citation type="submission" date="2004-01" db="EMBL/GenBank/DDBJ databases">
        <authorList>
            <consortium name="NIH - Zebrafish Gene Collection (ZGC) project"/>
        </authorList>
    </citation>
    <scope>NUCLEOTIDE SEQUENCE [LARGE SCALE MRNA]</scope>
</reference>
<proteinExistence type="evidence at transcript level"/>
<dbReference type="EMBL" id="BC065440">
    <property type="protein sequence ID" value="AAH65440.1"/>
    <property type="molecule type" value="mRNA"/>
</dbReference>
<dbReference type="RefSeq" id="NP_998375.1">
    <property type="nucleotide sequence ID" value="NM_213210.1"/>
</dbReference>
<dbReference type="SMR" id="Q6P0U9"/>
<dbReference type="FunCoup" id="Q6P0U9">
    <property type="interactions" value="990"/>
</dbReference>
<dbReference type="STRING" id="7955.ENSDARP00000050124"/>
<dbReference type="PaxDb" id="7955-ENSDARP00000050124"/>
<dbReference type="Ensembl" id="ENSDART00000050125">
    <property type="protein sequence ID" value="ENSDARP00000050124"/>
    <property type="gene ID" value="ENSDARG00000029043"/>
</dbReference>
<dbReference type="GeneID" id="406491"/>
<dbReference type="KEGG" id="dre:406491"/>
<dbReference type="AGR" id="ZFIN:ZDB-GENE-040426-2292"/>
<dbReference type="CTD" id="11097"/>
<dbReference type="ZFIN" id="ZDB-GENE-040426-2292">
    <property type="gene designation" value="nup42"/>
</dbReference>
<dbReference type="eggNOG" id="ENOG502R2TD">
    <property type="taxonomic scope" value="Eukaryota"/>
</dbReference>
<dbReference type="HOGENOM" id="CLU_048441_0_0_1"/>
<dbReference type="InParanoid" id="Q6P0U9"/>
<dbReference type="OMA" id="CHNEHFD"/>
<dbReference type="OrthoDB" id="20729at2759"/>
<dbReference type="PhylomeDB" id="Q6P0U9"/>
<dbReference type="TreeFam" id="TF106503"/>
<dbReference type="PRO" id="PR:Q6P0U9"/>
<dbReference type="Proteomes" id="UP000000437">
    <property type="component" value="Chromosome 19"/>
</dbReference>
<dbReference type="Bgee" id="ENSDARG00000029043">
    <property type="expression patterns" value="Expressed in testis and 27 other cell types or tissues"/>
</dbReference>
<dbReference type="GO" id="GO:0031965">
    <property type="term" value="C:nuclear membrane"/>
    <property type="evidence" value="ECO:0007669"/>
    <property type="project" value="UniProtKB-SubCell"/>
</dbReference>
<dbReference type="GO" id="GO:0005643">
    <property type="term" value="C:nuclear pore"/>
    <property type="evidence" value="ECO:0007669"/>
    <property type="project" value="UniProtKB-SubCell"/>
</dbReference>
<dbReference type="GO" id="GO:0005049">
    <property type="term" value="F:nuclear export signal receptor activity"/>
    <property type="evidence" value="ECO:0000318"/>
    <property type="project" value="GO_Central"/>
</dbReference>
<dbReference type="GO" id="GO:0008270">
    <property type="term" value="F:zinc ion binding"/>
    <property type="evidence" value="ECO:0007669"/>
    <property type="project" value="UniProtKB-KW"/>
</dbReference>
<dbReference type="GO" id="GO:0051028">
    <property type="term" value="P:mRNA transport"/>
    <property type="evidence" value="ECO:0007669"/>
    <property type="project" value="UniProtKB-KW"/>
</dbReference>
<dbReference type="GO" id="GO:0015031">
    <property type="term" value="P:protein transport"/>
    <property type="evidence" value="ECO:0007669"/>
    <property type="project" value="UniProtKB-KW"/>
</dbReference>
<dbReference type="InterPro" id="IPR051767">
    <property type="entry name" value="Nucleoporin_NUP42"/>
</dbReference>
<dbReference type="InterPro" id="IPR000571">
    <property type="entry name" value="Znf_CCCH"/>
</dbReference>
<dbReference type="PANTHER" id="PTHR46527:SF1">
    <property type="entry name" value="NUCLEOPORIN NUP42"/>
    <property type="match status" value="1"/>
</dbReference>
<dbReference type="PANTHER" id="PTHR46527">
    <property type="entry name" value="NUCLEOPORIN-LIKE PROTEIN 2"/>
    <property type="match status" value="1"/>
</dbReference>
<dbReference type="SMART" id="SM00356">
    <property type="entry name" value="ZnF_C3H1"/>
    <property type="match status" value="1"/>
</dbReference>
<dbReference type="PROSITE" id="PS50103">
    <property type="entry name" value="ZF_C3H1"/>
    <property type="match status" value="1"/>
</dbReference>
<feature type="chain" id="PRO_0000204899" description="Nucleoporin NUP42">
    <location>
        <begin position="1"/>
        <end position="414"/>
    </location>
</feature>
<feature type="repeat" description="FG 1">
    <location>
        <begin position="43"/>
        <end position="44"/>
    </location>
</feature>
<feature type="repeat" description="FG 2">
    <location>
        <begin position="207"/>
        <end position="208"/>
    </location>
</feature>
<feature type="repeat" description="FG 3">
    <location>
        <begin position="214"/>
        <end position="215"/>
    </location>
</feature>
<feature type="repeat" description="FG 5">
    <location>
        <begin position="221"/>
        <end position="222"/>
    </location>
</feature>
<feature type="repeat" description="FG 6">
    <location>
        <begin position="233"/>
        <end position="234"/>
    </location>
</feature>
<feature type="repeat" description="FG 4">
    <location>
        <begin position="238"/>
        <end position="239"/>
    </location>
</feature>
<feature type="repeat" description="FG 7">
    <location>
        <begin position="257"/>
        <end position="258"/>
    </location>
</feature>
<feature type="repeat" description="FG 8">
    <location>
        <begin position="268"/>
        <end position="269"/>
    </location>
</feature>
<feature type="repeat" description="FG 9">
    <location>
        <begin position="280"/>
        <end position="281"/>
    </location>
</feature>
<feature type="repeat" description="FG 10">
    <location>
        <begin position="306"/>
        <end position="307"/>
    </location>
</feature>
<feature type="repeat" description="FG 11">
    <location>
        <begin position="325"/>
        <end position="326"/>
    </location>
</feature>
<feature type="repeat" description="FG 12">
    <location>
        <begin position="329"/>
        <end position="330"/>
    </location>
</feature>
<feature type="repeat" description="FG 13">
    <location>
        <begin position="335"/>
        <end position="336"/>
    </location>
</feature>
<feature type="repeat" description="FG 14">
    <location>
        <begin position="341"/>
        <end position="342"/>
    </location>
</feature>
<feature type="repeat" description="FG 15">
    <location>
        <begin position="347"/>
        <end position="348"/>
    </location>
</feature>
<feature type="repeat" description="FG 16">
    <location>
        <begin position="351"/>
        <end position="352"/>
    </location>
</feature>
<feature type="repeat" description="FG 17">
    <location>
        <begin position="362"/>
        <end position="363"/>
    </location>
</feature>
<feature type="zinc finger region" description="C3H1-type" evidence="3">
    <location>
        <begin position="1"/>
        <end position="25"/>
    </location>
</feature>
<feature type="region of interest" description="Disordered" evidence="4">
    <location>
        <begin position="24"/>
        <end position="73"/>
    </location>
</feature>
<feature type="region of interest" description="Disordered" evidence="4">
    <location>
        <begin position="200"/>
        <end position="221"/>
    </location>
</feature>
<accession>Q6P0U9</accession>
<protein>
    <recommendedName>
        <fullName evidence="5">Nucleoporin NUP42</fullName>
    </recommendedName>
    <alternativeName>
        <fullName>Nucleoporin-like protein 2</fullName>
    </alternativeName>
</protein>
<evidence type="ECO:0000250" key="1"/>
<evidence type="ECO:0000250" key="2">
    <source>
        <dbReference type="UniProtKB" id="O15504"/>
    </source>
</evidence>
<evidence type="ECO:0000255" key="3">
    <source>
        <dbReference type="PROSITE-ProRule" id="PRU00723"/>
    </source>
</evidence>
<evidence type="ECO:0000256" key="4">
    <source>
        <dbReference type="SAM" id="MobiDB-lite"/>
    </source>
</evidence>
<evidence type="ECO:0000305" key="5"/>
<sequence length="414" mass="42580">MPVCNFFLQGRCRYGDTCWNEHPTGGRGGDYRGNQQPSNRGGFGNRVWINPSQRGGGGSSSAGGSNEWGRGAASARDVQSSEFSFSQNRFSALETQRAGAEDTHTTLDTIQKEMEVWQTSGQWPFSCYSAVNRQISGFIELCPEELRLEYYTSRASGDIQPYINSVQQLANQWRSRVQELRNMSSSTQISVIAELKSSSPPASAPGFGSPGPGFGSATSGFGNTSLSSPPAGFGGAGFGSGPQSSSTFSFAQSKTDFGASNTQQASGFGSSAFAQPSSGFGNPAPSAASFSFAAADSESKPSAGGFGSASGFSFKTATAGQGSGFGSGFGSSSGFGSSSGFGSSSGFGSAFGSAAPAQSSSFGSTGGAADTQSGHGLFTANSELTPEELKEFMAKRFTLGQIPLRPPPADLLMI</sequence>
<name>NUP42_DANRE</name>